<feature type="chain" id="PRO_0000213767" description="N-methyl-L-tryptophan oxidase">
    <location>
        <begin position="1"/>
        <end position="372"/>
    </location>
</feature>
<feature type="binding site" evidence="1">
    <location>
        <begin position="4"/>
        <end position="34"/>
    </location>
    <ligand>
        <name>FAD</name>
        <dbReference type="ChEBI" id="CHEBI:57692"/>
    </ligand>
</feature>
<feature type="modified residue" description="S-8alpha-FAD cysteine" evidence="1">
    <location>
        <position position="308"/>
    </location>
</feature>
<dbReference type="EC" id="1.5.3.-" evidence="1"/>
<dbReference type="EMBL" id="AE005174">
    <property type="protein sequence ID" value="AAG55805.1"/>
    <property type="molecule type" value="Genomic_DNA"/>
</dbReference>
<dbReference type="EMBL" id="BA000007">
    <property type="protein sequence ID" value="BAB34860.1"/>
    <property type="molecule type" value="Genomic_DNA"/>
</dbReference>
<dbReference type="PIR" id="A85668">
    <property type="entry name" value="A85668"/>
</dbReference>
<dbReference type="PIR" id="E90808">
    <property type="entry name" value="E90808"/>
</dbReference>
<dbReference type="RefSeq" id="NP_309464.1">
    <property type="nucleotide sequence ID" value="NC_002695.1"/>
</dbReference>
<dbReference type="RefSeq" id="WP_000872798.1">
    <property type="nucleotide sequence ID" value="NZ_VOAI01000018.1"/>
</dbReference>
<dbReference type="SMR" id="P58523"/>
<dbReference type="STRING" id="155864.Z1696"/>
<dbReference type="GeneID" id="912344"/>
<dbReference type="KEGG" id="ece:Z1696"/>
<dbReference type="KEGG" id="ecs:ECs_1437"/>
<dbReference type="PATRIC" id="fig|386585.9.peg.1538"/>
<dbReference type="eggNOG" id="COG0665">
    <property type="taxonomic scope" value="Bacteria"/>
</dbReference>
<dbReference type="HOGENOM" id="CLU_007884_2_1_6"/>
<dbReference type="OMA" id="FPSMWFQ"/>
<dbReference type="Proteomes" id="UP000000558">
    <property type="component" value="Chromosome"/>
</dbReference>
<dbReference type="Proteomes" id="UP000002519">
    <property type="component" value="Chromosome"/>
</dbReference>
<dbReference type="GO" id="GO:0005829">
    <property type="term" value="C:cytosol"/>
    <property type="evidence" value="ECO:0007669"/>
    <property type="project" value="TreeGrafter"/>
</dbReference>
<dbReference type="GO" id="GO:0050660">
    <property type="term" value="F:flavin adenine dinucleotide binding"/>
    <property type="evidence" value="ECO:0007669"/>
    <property type="project" value="InterPro"/>
</dbReference>
<dbReference type="GO" id="GO:0050131">
    <property type="term" value="F:N-methyl-L-amino-acid oxidase activity"/>
    <property type="evidence" value="ECO:0007669"/>
    <property type="project" value="InterPro"/>
</dbReference>
<dbReference type="GO" id="GO:0008115">
    <property type="term" value="F:sarcosine oxidase activity"/>
    <property type="evidence" value="ECO:0007669"/>
    <property type="project" value="TreeGrafter"/>
</dbReference>
<dbReference type="Gene3D" id="3.30.9.10">
    <property type="entry name" value="D-Amino Acid Oxidase, subunit A, domain 2"/>
    <property type="match status" value="1"/>
</dbReference>
<dbReference type="Gene3D" id="3.50.50.60">
    <property type="entry name" value="FAD/NAD(P)-binding domain"/>
    <property type="match status" value="1"/>
</dbReference>
<dbReference type="HAMAP" id="MF_00515">
    <property type="entry name" value="MTOX"/>
    <property type="match status" value="1"/>
</dbReference>
<dbReference type="InterPro" id="IPR006076">
    <property type="entry name" value="FAD-dep_OxRdtase"/>
</dbReference>
<dbReference type="InterPro" id="IPR036188">
    <property type="entry name" value="FAD/NAD-bd_sf"/>
</dbReference>
<dbReference type="InterPro" id="IPR023493">
    <property type="entry name" value="Me_Trp_Oxase_MTOX"/>
</dbReference>
<dbReference type="InterPro" id="IPR045170">
    <property type="entry name" value="MTOX"/>
</dbReference>
<dbReference type="NCBIfam" id="NF008425">
    <property type="entry name" value="PRK11259.1"/>
    <property type="match status" value="1"/>
</dbReference>
<dbReference type="PANTHER" id="PTHR10961:SF7">
    <property type="entry name" value="FAD DEPENDENT OXIDOREDUCTASE DOMAIN-CONTAINING PROTEIN"/>
    <property type="match status" value="1"/>
</dbReference>
<dbReference type="PANTHER" id="PTHR10961">
    <property type="entry name" value="PEROXISOMAL SARCOSINE OXIDASE"/>
    <property type="match status" value="1"/>
</dbReference>
<dbReference type="Pfam" id="PF01266">
    <property type="entry name" value="DAO"/>
    <property type="match status" value="1"/>
</dbReference>
<dbReference type="SUPFAM" id="SSF54373">
    <property type="entry name" value="FAD-linked reductases, C-terminal domain"/>
    <property type="match status" value="1"/>
</dbReference>
<dbReference type="SUPFAM" id="SSF51905">
    <property type="entry name" value="FAD/NAD(P)-binding domain"/>
    <property type="match status" value="1"/>
</dbReference>
<name>MTOX_ECO57</name>
<reference key="1">
    <citation type="journal article" date="2001" name="Nature">
        <title>Genome sequence of enterohaemorrhagic Escherichia coli O157:H7.</title>
        <authorList>
            <person name="Perna N.T."/>
            <person name="Plunkett G. III"/>
            <person name="Burland V."/>
            <person name="Mau B."/>
            <person name="Glasner J.D."/>
            <person name="Rose D.J."/>
            <person name="Mayhew G.F."/>
            <person name="Evans P.S."/>
            <person name="Gregor J."/>
            <person name="Kirkpatrick H.A."/>
            <person name="Posfai G."/>
            <person name="Hackett J."/>
            <person name="Klink S."/>
            <person name="Boutin A."/>
            <person name="Shao Y."/>
            <person name="Miller L."/>
            <person name="Grotbeck E.J."/>
            <person name="Davis N.W."/>
            <person name="Lim A."/>
            <person name="Dimalanta E.T."/>
            <person name="Potamousis K."/>
            <person name="Apodaca J."/>
            <person name="Anantharaman T.S."/>
            <person name="Lin J."/>
            <person name="Yen G."/>
            <person name="Schwartz D.C."/>
            <person name="Welch R.A."/>
            <person name="Blattner F.R."/>
        </authorList>
    </citation>
    <scope>NUCLEOTIDE SEQUENCE [LARGE SCALE GENOMIC DNA]</scope>
    <source>
        <strain>O157:H7 / EDL933 / ATCC 700927 / EHEC</strain>
    </source>
</reference>
<reference key="2">
    <citation type="journal article" date="2001" name="DNA Res.">
        <title>Complete genome sequence of enterohemorrhagic Escherichia coli O157:H7 and genomic comparison with a laboratory strain K-12.</title>
        <authorList>
            <person name="Hayashi T."/>
            <person name="Makino K."/>
            <person name="Ohnishi M."/>
            <person name="Kurokawa K."/>
            <person name="Ishii K."/>
            <person name="Yokoyama K."/>
            <person name="Han C.-G."/>
            <person name="Ohtsubo E."/>
            <person name="Nakayama K."/>
            <person name="Murata T."/>
            <person name="Tanaka M."/>
            <person name="Tobe T."/>
            <person name="Iida T."/>
            <person name="Takami H."/>
            <person name="Honda T."/>
            <person name="Sasakawa C."/>
            <person name="Ogasawara N."/>
            <person name="Yasunaga T."/>
            <person name="Kuhara S."/>
            <person name="Shiba T."/>
            <person name="Hattori M."/>
            <person name="Shinagawa H."/>
        </authorList>
    </citation>
    <scope>NUCLEOTIDE SEQUENCE [LARGE SCALE GENOMIC DNA]</scope>
    <source>
        <strain>O157:H7 / Sakai / RIMD 0509952 / EHEC</strain>
    </source>
</reference>
<gene>
    <name evidence="1" type="primary">solA</name>
    <name type="ordered locus">Z1696</name>
    <name type="ordered locus">ECs1437</name>
</gene>
<accession>P58523</accession>
<protein>
    <recommendedName>
        <fullName evidence="1">N-methyl-L-tryptophan oxidase</fullName>
        <shortName evidence="1">MTOX</shortName>
        <ecNumber evidence="1">1.5.3.-</ecNumber>
    </recommendedName>
</protein>
<sequence length="372" mass="40803">MKYDLIIIGSGSVGAAAGYYATRAGLNVLMTDAHMPPHQHGSHHGDTRLIRHAYGEGEKYVPLVLRAQTLWDDLSRHNEDDPIFVRSGVINLGPADSAFLANVAHSAEQWQLNVEKLDAQGIMARWPEIRVPDNYIGLFETDSGFLRSELAIKTWIQLAKEAGCAQLFNCPVTAIRHDDDGVTIETADGEYQAKKAIVCAGTWVKDLLPELPVQPVRKVFAWYQADGRYSVKNKFPAFTGELPNGDQYYGFPAENDALKIGKHNGGQVIHSADERVPFAEVVSDGSEAFPFLRNVLPGIGCCLYGAACTYDNSPDEDFIIDTLPGHDNTLLITGLSGHGFKFASVLGEIAADFAQDKKSDFDLTPFSLSRFQ</sequence>
<comment type="function">
    <text evidence="1">Catalyzes the oxidative demethylation of N-methyl-L-tryptophan.</text>
</comment>
<comment type="catalytic activity">
    <reaction evidence="1">
        <text>N(alpha)-methyl-L-tryptophan + O2 + H2O = L-tryptophan + formaldehyde + H2O2</text>
        <dbReference type="Rhea" id="RHEA:28006"/>
        <dbReference type="ChEBI" id="CHEBI:15377"/>
        <dbReference type="ChEBI" id="CHEBI:15379"/>
        <dbReference type="ChEBI" id="CHEBI:16240"/>
        <dbReference type="ChEBI" id="CHEBI:16842"/>
        <dbReference type="ChEBI" id="CHEBI:57283"/>
        <dbReference type="ChEBI" id="CHEBI:57912"/>
    </reaction>
</comment>
<comment type="cofactor">
    <cofactor evidence="1">
        <name>FAD</name>
        <dbReference type="ChEBI" id="CHEBI:57692"/>
    </cofactor>
    <text evidence="1">Binds 1 FAD per subunit.</text>
</comment>
<comment type="subunit">
    <text evidence="1">Monomer.</text>
</comment>
<comment type="similarity">
    <text evidence="1">Belongs to the MSOX/MTOX family. MTOX subfamily.</text>
</comment>
<organism>
    <name type="scientific">Escherichia coli O157:H7</name>
    <dbReference type="NCBI Taxonomy" id="83334"/>
    <lineage>
        <taxon>Bacteria</taxon>
        <taxon>Pseudomonadati</taxon>
        <taxon>Pseudomonadota</taxon>
        <taxon>Gammaproteobacteria</taxon>
        <taxon>Enterobacterales</taxon>
        <taxon>Enterobacteriaceae</taxon>
        <taxon>Escherichia</taxon>
    </lineage>
</organism>
<evidence type="ECO:0000255" key="1">
    <source>
        <dbReference type="HAMAP-Rule" id="MF_00515"/>
    </source>
</evidence>
<proteinExistence type="inferred from homology"/>
<keyword id="KW-0274">FAD</keyword>
<keyword id="KW-0285">Flavoprotein</keyword>
<keyword id="KW-0560">Oxidoreductase</keyword>
<keyword id="KW-1185">Reference proteome</keyword>